<reference key="1">
    <citation type="journal article" date="2004" name="Proc. Natl. Acad. Sci. U.S.A.">
        <title>The diploid genome sequence of Candida albicans.</title>
        <authorList>
            <person name="Jones T."/>
            <person name="Federspiel N.A."/>
            <person name="Chibana H."/>
            <person name="Dungan J."/>
            <person name="Kalman S."/>
            <person name="Magee B.B."/>
            <person name="Newport G."/>
            <person name="Thorstenson Y.R."/>
            <person name="Agabian N."/>
            <person name="Magee P.T."/>
            <person name="Davis R.W."/>
            <person name="Scherer S."/>
        </authorList>
    </citation>
    <scope>NUCLEOTIDE SEQUENCE [LARGE SCALE GENOMIC DNA]</scope>
    <source>
        <strain>SC5314 / ATCC MYA-2876</strain>
    </source>
</reference>
<reference key="2">
    <citation type="journal article" date="2007" name="Genome Biol.">
        <title>Assembly of the Candida albicans genome into sixteen supercontigs aligned on the eight chromosomes.</title>
        <authorList>
            <person name="van het Hoog M."/>
            <person name="Rast T.J."/>
            <person name="Martchenko M."/>
            <person name="Grindle S."/>
            <person name="Dignard D."/>
            <person name="Hogues H."/>
            <person name="Cuomo C."/>
            <person name="Berriman M."/>
            <person name="Scherer S."/>
            <person name="Magee B.B."/>
            <person name="Whiteway M."/>
            <person name="Chibana H."/>
            <person name="Nantel A."/>
            <person name="Magee P.T."/>
        </authorList>
    </citation>
    <scope>GENOME REANNOTATION</scope>
    <source>
        <strain>SC5314 / ATCC MYA-2876</strain>
    </source>
</reference>
<reference key="3">
    <citation type="journal article" date="2013" name="Genome Biol.">
        <title>Assembly of a phased diploid Candida albicans genome facilitates allele-specific measurements and provides a simple model for repeat and indel structure.</title>
        <authorList>
            <person name="Muzzey D."/>
            <person name="Schwartz K."/>
            <person name="Weissman J.S."/>
            <person name="Sherlock G."/>
        </authorList>
    </citation>
    <scope>NUCLEOTIDE SEQUENCE [LARGE SCALE GENOMIC DNA]</scope>
    <scope>GENOME REANNOTATION</scope>
    <source>
        <strain>SC5314 / ATCC MYA-2876</strain>
    </source>
</reference>
<reference key="4">
    <citation type="journal article" date="2002" name="Eukaryot. Cell">
        <title>Large-scale identification of putative exported proteins in Candida albicans by genetic selection.</title>
        <authorList>
            <person name="Monteoliva L."/>
            <person name="Matas M.L."/>
            <person name="Gil C."/>
            <person name="Nombela C."/>
            <person name="Pla J."/>
        </authorList>
    </citation>
    <scope>SUBCELLULAR LOCATION</scope>
</reference>
<reference key="5">
    <citation type="journal article" date="2005" name="Fungal Genet. Biol.">
        <title>Candida albicans CHT3 encodes the functional homolog of the Cts1 chitinase of Saccharomyces cerevisiae.</title>
        <authorList>
            <person name="Dunkler A."/>
            <person name="Walther A."/>
            <person name="Specht C.A."/>
            <person name="Wendland J."/>
        </authorList>
    </citation>
    <scope>DISRUPTION PHENOTYPE</scope>
</reference>
<reference key="6">
    <citation type="journal article" date="2010" name="Jpn. J. Infect. Dis.">
        <title>Micafungin alters the expression of genes related to cell wall integrity in Candida albicans biofilms.</title>
        <authorList>
            <person name="Kaneko Y."/>
            <person name="Ohno H."/>
            <person name="Kohno S."/>
            <person name="Miyazaki Y."/>
        </authorList>
    </citation>
    <scope>INDUCTION</scope>
</reference>
<reference key="7">
    <citation type="journal article" date="2010" name="Yeast">
        <title>Mass spectrometric analysis of the secretome of Candida albicans.</title>
        <authorList>
            <person name="Sorgo A.G."/>
            <person name="Heilmann C.J."/>
            <person name="Dekker H.L."/>
            <person name="Brul S."/>
            <person name="de Koster C.G."/>
            <person name="Klis F.M."/>
        </authorList>
    </citation>
    <scope>IDENTIFICATION BY MASS SPECTROMETRY</scope>
    <scope>SUBCELLULAR LOCATION</scope>
</reference>
<dbReference type="EC" id="3.2.1.14"/>
<dbReference type="EMBL" id="CP017630">
    <property type="protein sequence ID" value="AOW30789.1"/>
    <property type="molecule type" value="Genomic_DNA"/>
</dbReference>
<dbReference type="RefSeq" id="XP_718674.1">
    <property type="nucleotide sequence ID" value="XM_713581.1"/>
</dbReference>
<dbReference type="SMR" id="Q5AAH2"/>
<dbReference type="STRING" id="237561.Q5AAH2"/>
<dbReference type="GlyCosmos" id="Q5AAH2">
    <property type="glycosylation" value="1 site, No reported glycans"/>
</dbReference>
<dbReference type="EnsemblFungi" id="CR_00180C_A-T">
    <property type="protein sequence ID" value="CR_00180C_A-T-p1"/>
    <property type="gene ID" value="CR_00180C_A"/>
</dbReference>
<dbReference type="GeneID" id="3639704"/>
<dbReference type="KEGG" id="cal:CAALFM_CR00180CA"/>
<dbReference type="CGD" id="CAL0000179750">
    <property type="gene designation" value="CHT1"/>
</dbReference>
<dbReference type="VEuPathDB" id="FungiDB:CR_00180C_A"/>
<dbReference type="HOGENOM" id="CLU_007818_7_2_1"/>
<dbReference type="InParanoid" id="Q5AAH2"/>
<dbReference type="OMA" id="WTSTEAK"/>
<dbReference type="OrthoDB" id="6020543at2759"/>
<dbReference type="Proteomes" id="UP000000559">
    <property type="component" value="Chromosome R"/>
</dbReference>
<dbReference type="GO" id="GO:0005935">
    <property type="term" value="C:cellular bud neck"/>
    <property type="evidence" value="ECO:0007669"/>
    <property type="project" value="EnsemblFungi"/>
</dbReference>
<dbReference type="GO" id="GO:0005576">
    <property type="term" value="C:extracellular region"/>
    <property type="evidence" value="ECO:0000314"/>
    <property type="project" value="CGD"/>
</dbReference>
<dbReference type="GO" id="GO:0009277">
    <property type="term" value="C:fungal-type cell wall"/>
    <property type="evidence" value="ECO:0007669"/>
    <property type="project" value="EnsemblFungi"/>
</dbReference>
<dbReference type="GO" id="GO:0008061">
    <property type="term" value="F:chitin binding"/>
    <property type="evidence" value="ECO:0007669"/>
    <property type="project" value="UniProtKB-KW"/>
</dbReference>
<dbReference type="GO" id="GO:0004568">
    <property type="term" value="F:chitinase activity"/>
    <property type="evidence" value="ECO:0000250"/>
    <property type="project" value="CGD"/>
</dbReference>
<dbReference type="GO" id="GO:0008843">
    <property type="term" value="F:endochitinase activity"/>
    <property type="evidence" value="ECO:0007669"/>
    <property type="project" value="UniProtKB-EC"/>
</dbReference>
<dbReference type="GO" id="GO:0006032">
    <property type="term" value="P:chitin catabolic process"/>
    <property type="evidence" value="ECO:0007669"/>
    <property type="project" value="UniProtKB-KW"/>
</dbReference>
<dbReference type="GO" id="GO:0030447">
    <property type="term" value="P:filamentous growth"/>
    <property type="evidence" value="ECO:0000315"/>
    <property type="project" value="CGD"/>
</dbReference>
<dbReference type="GO" id="GO:0044182">
    <property type="term" value="P:filamentous growth of a population of unicellular organisms"/>
    <property type="evidence" value="ECO:0000315"/>
    <property type="project" value="CGD"/>
</dbReference>
<dbReference type="GO" id="GO:0000272">
    <property type="term" value="P:polysaccharide catabolic process"/>
    <property type="evidence" value="ECO:0007669"/>
    <property type="project" value="UniProtKB-KW"/>
</dbReference>
<dbReference type="GO" id="GO:0000920">
    <property type="term" value="P:septum digestion after cytokinesis"/>
    <property type="evidence" value="ECO:0007669"/>
    <property type="project" value="EnsemblFungi"/>
</dbReference>
<dbReference type="CDD" id="cd02877">
    <property type="entry name" value="GH18_hevamine_XipI_class_III"/>
    <property type="match status" value="1"/>
</dbReference>
<dbReference type="FunFam" id="3.20.20.80:FF:000125">
    <property type="entry name" value="CTS1p Endochitinase"/>
    <property type="match status" value="1"/>
</dbReference>
<dbReference type="Gene3D" id="3.20.20.80">
    <property type="entry name" value="Glycosidases"/>
    <property type="match status" value="1"/>
</dbReference>
<dbReference type="InterPro" id="IPR045321">
    <property type="entry name" value="Cts1-like"/>
</dbReference>
<dbReference type="InterPro" id="IPR001223">
    <property type="entry name" value="Glyco_hydro18_cat"/>
</dbReference>
<dbReference type="InterPro" id="IPR001579">
    <property type="entry name" value="Glyco_hydro_18_chit_AS"/>
</dbReference>
<dbReference type="InterPro" id="IPR017853">
    <property type="entry name" value="Glycoside_hydrolase_SF"/>
</dbReference>
<dbReference type="InterPro" id="IPR050542">
    <property type="entry name" value="Glycosyl_Hydrlase18_Chitinase"/>
</dbReference>
<dbReference type="PANTHER" id="PTHR45708">
    <property type="entry name" value="ENDOCHITINASE"/>
    <property type="match status" value="1"/>
</dbReference>
<dbReference type="PANTHER" id="PTHR45708:SF49">
    <property type="entry name" value="ENDOCHITINASE"/>
    <property type="match status" value="1"/>
</dbReference>
<dbReference type="Pfam" id="PF00704">
    <property type="entry name" value="Glyco_hydro_18"/>
    <property type="match status" value="1"/>
</dbReference>
<dbReference type="SUPFAM" id="SSF51445">
    <property type="entry name" value="(Trans)glycosidases"/>
    <property type="match status" value="1"/>
</dbReference>
<dbReference type="PROSITE" id="PS01095">
    <property type="entry name" value="GH18_1"/>
    <property type="match status" value="1"/>
</dbReference>
<dbReference type="PROSITE" id="PS51910">
    <property type="entry name" value="GH18_2"/>
    <property type="match status" value="1"/>
</dbReference>
<accession>Q5AAH2</accession>
<accession>A0A1D8PRM1</accession>
<name>CHI1_CANAL</name>
<keyword id="KW-0119">Carbohydrate metabolism</keyword>
<keyword id="KW-0146">Chitin degradation</keyword>
<keyword id="KW-0147">Chitin-binding</keyword>
<keyword id="KW-0325">Glycoprotein</keyword>
<keyword id="KW-0326">Glycosidase</keyword>
<keyword id="KW-0378">Hydrolase</keyword>
<keyword id="KW-0624">Polysaccharide degradation</keyword>
<keyword id="KW-1185">Reference proteome</keyword>
<keyword id="KW-0964">Secreted</keyword>
<keyword id="KW-0732">Signal</keyword>
<gene>
    <name type="primary">CHT1</name>
    <name type="ordered locus">CAALFM_CR00180CA</name>
    <name type="ORF">CaO19.7517</name>
</gene>
<feature type="signal peptide" evidence="1">
    <location>
        <begin position="1"/>
        <end position="17"/>
    </location>
</feature>
<feature type="chain" id="PRO_0000429924" description="Chitinase 1">
    <location>
        <begin position="18"/>
        <end position="462"/>
    </location>
</feature>
<feature type="domain" description="GH18" evidence="2">
    <location>
        <begin position="18"/>
        <end position="291"/>
    </location>
</feature>
<feature type="active site" description="Proton donor" evidence="2">
    <location>
        <position position="147"/>
    </location>
</feature>
<feature type="glycosylation site" description="N-linked (GlcNAc...) asparagine" evidence="1">
    <location>
        <position position="57"/>
    </location>
</feature>
<protein>
    <recommendedName>
        <fullName>Chitinase 1</fullName>
        <ecNumber>3.2.1.14</ecNumber>
    </recommendedName>
</protein>
<sequence>MILNLIILLAISIVASASNIAAYWGQNAGGDQQTLGDYCSSSPASIIILSFLDGFPNLSLNFANQCSGTFSSGLAHCSQIGSDIKSCQQQGKTILLSLGGATGNYGFSSDSEAVQFAGTLWNKFGGGKDSERPFDDAIVDGFDFDIENKDQTGYAALATQLRKYFSTGTKSYYLSAAPQCPYPDESVGDLMSQVDLDFAFIQFYNNYCSLNQQFNWNSWSNYARGKSIKLYLGLPGSSSSAGSGFVGLSTVQRVVASIKGDSSFGGISIWDISSAENGGYLNQLHQALSGSGSPAAPSNSYQPNTPLTRTYGGSTATASAYISVGFTAGATHGSTTTNDLLAWIDSLFGSSQSSVQQYATPVQSVTATPQPVAATTTSAPKPTASAFNWFGWFDGTTTSTTLQTVYSTVPADQTVYVTLTTTVGSQMLQSLFDKRDVIAEAKSTNLQICWLLFIPLLALICS</sequence>
<organism>
    <name type="scientific">Candida albicans (strain SC5314 / ATCC MYA-2876)</name>
    <name type="common">Yeast</name>
    <dbReference type="NCBI Taxonomy" id="237561"/>
    <lineage>
        <taxon>Eukaryota</taxon>
        <taxon>Fungi</taxon>
        <taxon>Dikarya</taxon>
        <taxon>Ascomycota</taxon>
        <taxon>Saccharomycotina</taxon>
        <taxon>Pichiomycetes</taxon>
        <taxon>Debaryomycetaceae</taxon>
        <taxon>Candida/Lodderomyces clade</taxon>
        <taxon>Candida</taxon>
    </lineage>
</organism>
<evidence type="ECO:0000255" key="1"/>
<evidence type="ECO:0000255" key="2">
    <source>
        <dbReference type="PROSITE-ProRule" id="PRU01258"/>
    </source>
</evidence>
<evidence type="ECO:0000269" key="3">
    <source>
    </source>
</evidence>
<evidence type="ECO:0000269" key="4">
    <source>
    </source>
</evidence>
<evidence type="ECO:0000269" key="5">
    <source>
    </source>
</evidence>
<evidence type="ECO:0000269" key="6">
    <source>
    </source>
</evidence>
<evidence type="ECO:0000305" key="7"/>
<comment type="function">
    <text>Chitinase involved in the remodeling of chitin in the fungal cell wall. Plays a role in cell separation.</text>
</comment>
<comment type="catalytic activity">
    <reaction>
        <text>Random endo-hydrolysis of N-acetyl-beta-D-glucosaminide (1-&gt;4)-beta-linkages in chitin and chitodextrins.</text>
        <dbReference type="EC" id="3.2.1.14"/>
    </reaction>
</comment>
<comment type="subcellular location">
    <subcellularLocation>
        <location evidence="3 5">Secreted</location>
    </subcellularLocation>
</comment>
<comment type="induction">
    <text evidence="6">Transcription is greater during growth of the yeast form as compared to the mycelial form and up-regulated by micafungin treatment.</text>
</comment>
<comment type="disruption phenotype">
    <text evidence="4">Leads to increased hyphal growth on solid media.</text>
</comment>
<comment type="similarity">
    <text evidence="7">Belongs to the glycosyl hydrolase 18 family. Chitinase class V subfamily.</text>
</comment>
<proteinExistence type="evidence at protein level"/>